<sequence length="223" mass="24840">MKPIIPPQNLSELLERANMMAGISLAQIAAHRGIAVPKDLKRDKGWVGQLIEMELGATAGSKPEQDFLHLGVELKTIPIDSKGKPLETTYVCVAPLTNIEGLTWQDSLVCHKLQRVLWVPVEGERHIPVGDRRVGTPILWEPDLQEQRLLQQDWEEIMELIALGKVEKLTARHGEVLQLRPKAANSKALTQSIAEDGSLKMTNPRGFYLKTAFTAMLLNKVFG</sequence>
<dbReference type="EMBL" id="CP000469">
    <property type="protein sequence ID" value="ABK49269.1"/>
    <property type="molecule type" value="Genomic_DNA"/>
</dbReference>
<dbReference type="RefSeq" id="WP_011717889.1">
    <property type="nucleotide sequence ID" value="NC_008577.1"/>
</dbReference>
<dbReference type="SMR" id="A0KZQ0"/>
<dbReference type="STRING" id="94122.Shewana3_3044"/>
<dbReference type="GeneID" id="94728966"/>
<dbReference type="KEGG" id="shn:Shewana3_3044"/>
<dbReference type="eggNOG" id="COG3066">
    <property type="taxonomic scope" value="Bacteria"/>
</dbReference>
<dbReference type="HOGENOM" id="CLU_086669_0_0_6"/>
<dbReference type="OrthoDB" id="5634909at2"/>
<dbReference type="Proteomes" id="UP000002589">
    <property type="component" value="Chromosome"/>
</dbReference>
<dbReference type="GO" id="GO:0005737">
    <property type="term" value="C:cytoplasm"/>
    <property type="evidence" value="ECO:0007669"/>
    <property type="project" value="UniProtKB-SubCell"/>
</dbReference>
<dbReference type="GO" id="GO:0003677">
    <property type="term" value="F:DNA binding"/>
    <property type="evidence" value="ECO:0007669"/>
    <property type="project" value="InterPro"/>
</dbReference>
<dbReference type="GO" id="GO:0004519">
    <property type="term" value="F:endonuclease activity"/>
    <property type="evidence" value="ECO:0007669"/>
    <property type="project" value="UniProtKB-UniRule"/>
</dbReference>
<dbReference type="GO" id="GO:0006304">
    <property type="term" value="P:DNA modification"/>
    <property type="evidence" value="ECO:0007669"/>
    <property type="project" value="InterPro"/>
</dbReference>
<dbReference type="GO" id="GO:0006298">
    <property type="term" value="P:mismatch repair"/>
    <property type="evidence" value="ECO:0007669"/>
    <property type="project" value="UniProtKB-UniRule"/>
</dbReference>
<dbReference type="CDD" id="cd00583">
    <property type="entry name" value="MutH-like"/>
    <property type="match status" value="1"/>
</dbReference>
<dbReference type="Gene3D" id="3.40.600.10">
    <property type="entry name" value="DNA mismatch repair MutH/Restriction endonuclease, type II"/>
    <property type="match status" value="1"/>
</dbReference>
<dbReference type="HAMAP" id="MF_00759">
    <property type="entry name" value="MutH"/>
    <property type="match status" value="1"/>
</dbReference>
<dbReference type="InterPro" id="IPR004230">
    <property type="entry name" value="DNA_mismatch_repair_MutH"/>
</dbReference>
<dbReference type="InterPro" id="IPR011337">
    <property type="entry name" value="DNA_rep_MutH/RE_typeII_Sau3AI"/>
</dbReference>
<dbReference type="InterPro" id="IPR037057">
    <property type="entry name" value="DNA_rep_MutH/T2_RE_sf"/>
</dbReference>
<dbReference type="InterPro" id="IPR011335">
    <property type="entry name" value="Restrct_endonuc-II-like"/>
</dbReference>
<dbReference type="NCBIfam" id="TIGR02248">
    <property type="entry name" value="mutH_TIGR"/>
    <property type="match status" value="1"/>
</dbReference>
<dbReference type="NCBIfam" id="NF003458">
    <property type="entry name" value="PRK05070.1"/>
    <property type="match status" value="1"/>
</dbReference>
<dbReference type="Pfam" id="PF02976">
    <property type="entry name" value="MutH"/>
    <property type="match status" value="1"/>
</dbReference>
<dbReference type="SMART" id="SM00927">
    <property type="entry name" value="MutH"/>
    <property type="match status" value="1"/>
</dbReference>
<dbReference type="SUPFAM" id="SSF52980">
    <property type="entry name" value="Restriction endonuclease-like"/>
    <property type="match status" value="1"/>
</dbReference>
<comment type="function">
    <text evidence="1">Sequence-specific endonuclease that cleaves unmethylated GATC sequences. It is involved in DNA mismatch repair.</text>
</comment>
<comment type="subcellular location">
    <subcellularLocation>
        <location evidence="1">Cytoplasm</location>
    </subcellularLocation>
</comment>
<comment type="similarity">
    <text evidence="1">Belongs to the MutH family.</text>
</comment>
<proteinExistence type="inferred from homology"/>
<gene>
    <name evidence="1" type="primary">mutH</name>
    <name type="ordered locus">Shewana3_3044</name>
</gene>
<organism>
    <name type="scientific">Shewanella sp. (strain ANA-3)</name>
    <dbReference type="NCBI Taxonomy" id="94122"/>
    <lineage>
        <taxon>Bacteria</taxon>
        <taxon>Pseudomonadati</taxon>
        <taxon>Pseudomonadota</taxon>
        <taxon>Gammaproteobacteria</taxon>
        <taxon>Alteromonadales</taxon>
        <taxon>Shewanellaceae</taxon>
        <taxon>Shewanella</taxon>
    </lineage>
</organism>
<feature type="chain" id="PRO_1000046709" description="DNA mismatch repair protein MutH">
    <location>
        <begin position="1"/>
        <end position="223"/>
    </location>
</feature>
<name>MUTH_SHESA</name>
<protein>
    <recommendedName>
        <fullName evidence="1">DNA mismatch repair protein MutH</fullName>
    </recommendedName>
    <alternativeName>
        <fullName evidence="1">Methyl-directed mismatch repair protein</fullName>
    </alternativeName>
</protein>
<keyword id="KW-0963">Cytoplasm</keyword>
<keyword id="KW-0227">DNA damage</keyword>
<keyword id="KW-0234">DNA repair</keyword>
<keyword id="KW-0255">Endonuclease</keyword>
<keyword id="KW-0378">Hydrolase</keyword>
<keyword id="KW-0540">Nuclease</keyword>
<evidence type="ECO:0000255" key="1">
    <source>
        <dbReference type="HAMAP-Rule" id="MF_00759"/>
    </source>
</evidence>
<accession>A0KZQ0</accession>
<reference key="1">
    <citation type="submission" date="2006-09" db="EMBL/GenBank/DDBJ databases">
        <title>Complete sequence of chromosome 1 of Shewanella sp. ANA-3.</title>
        <authorList>
            <person name="Copeland A."/>
            <person name="Lucas S."/>
            <person name="Lapidus A."/>
            <person name="Barry K."/>
            <person name="Detter J.C."/>
            <person name="Glavina del Rio T."/>
            <person name="Hammon N."/>
            <person name="Israni S."/>
            <person name="Dalin E."/>
            <person name="Tice H."/>
            <person name="Pitluck S."/>
            <person name="Chertkov O."/>
            <person name="Brettin T."/>
            <person name="Bruce D."/>
            <person name="Han C."/>
            <person name="Tapia R."/>
            <person name="Gilna P."/>
            <person name="Schmutz J."/>
            <person name="Larimer F."/>
            <person name="Land M."/>
            <person name="Hauser L."/>
            <person name="Kyrpides N."/>
            <person name="Kim E."/>
            <person name="Newman D."/>
            <person name="Salticov C."/>
            <person name="Konstantinidis K."/>
            <person name="Klappenback J."/>
            <person name="Tiedje J."/>
            <person name="Richardson P."/>
        </authorList>
    </citation>
    <scope>NUCLEOTIDE SEQUENCE [LARGE SCALE GENOMIC DNA]</scope>
    <source>
        <strain>ANA-3</strain>
    </source>
</reference>